<protein>
    <recommendedName>
        <fullName evidence="2">tRNA (guanine-N(7)-)-methyltransferase</fullName>
        <ecNumber evidence="2">2.1.1.33</ecNumber>
    </recommendedName>
    <alternativeName>
        <fullName evidence="2">tRNA (guanine(46)-N(7))-methyltransferase</fullName>
    </alternativeName>
    <alternativeName>
        <fullName evidence="2">tRNA(m7G46)-methyltransferase</fullName>
    </alternativeName>
</protein>
<dbReference type="EC" id="2.1.1.33" evidence="2"/>
<dbReference type="EMBL" id="CP000431">
    <property type="protein sequence ID" value="ABG96957.1"/>
    <property type="molecule type" value="Genomic_DNA"/>
</dbReference>
<dbReference type="RefSeq" id="WP_011597391.1">
    <property type="nucleotide sequence ID" value="NC_008268.1"/>
</dbReference>
<dbReference type="SMR" id="Q0S679"/>
<dbReference type="KEGG" id="rha:RHA1_ro05176"/>
<dbReference type="eggNOG" id="COG0220">
    <property type="taxonomic scope" value="Bacteria"/>
</dbReference>
<dbReference type="HOGENOM" id="CLU_050910_0_2_11"/>
<dbReference type="UniPathway" id="UPA00989"/>
<dbReference type="Proteomes" id="UP000008710">
    <property type="component" value="Chromosome"/>
</dbReference>
<dbReference type="GO" id="GO:0043527">
    <property type="term" value="C:tRNA methyltransferase complex"/>
    <property type="evidence" value="ECO:0007669"/>
    <property type="project" value="TreeGrafter"/>
</dbReference>
<dbReference type="GO" id="GO:0008176">
    <property type="term" value="F:tRNA (guanine(46)-N7)-methyltransferase activity"/>
    <property type="evidence" value="ECO:0007669"/>
    <property type="project" value="UniProtKB-UniRule"/>
</dbReference>
<dbReference type="CDD" id="cd02440">
    <property type="entry name" value="AdoMet_MTases"/>
    <property type="match status" value="1"/>
</dbReference>
<dbReference type="Gene3D" id="3.40.50.150">
    <property type="entry name" value="Vaccinia Virus protein VP39"/>
    <property type="match status" value="1"/>
</dbReference>
<dbReference type="HAMAP" id="MF_01057">
    <property type="entry name" value="tRNA_methyltr_TrmB"/>
    <property type="match status" value="1"/>
</dbReference>
<dbReference type="InterPro" id="IPR029063">
    <property type="entry name" value="SAM-dependent_MTases_sf"/>
</dbReference>
<dbReference type="InterPro" id="IPR003358">
    <property type="entry name" value="tRNA_(Gua-N-7)_MeTrfase_Trmb"/>
</dbReference>
<dbReference type="InterPro" id="IPR055361">
    <property type="entry name" value="tRNA_methyltr_TrmB_bact"/>
</dbReference>
<dbReference type="NCBIfam" id="TIGR00091">
    <property type="entry name" value="tRNA (guanosine(46)-N7)-methyltransferase TrmB"/>
    <property type="match status" value="1"/>
</dbReference>
<dbReference type="PANTHER" id="PTHR23417">
    <property type="entry name" value="3-DEOXY-D-MANNO-OCTULOSONIC-ACID TRANSFERASE/TRNA GUANINE-N 7 - -METHYLTRANSFERASE"/>
    <property type="match status" value="1"/>
</dbReference>
<dbReference type="PANTHER" id="PTHR23417:SF14">
    <property type="entry name" value="PENTACOTRIPEPTIDE-REPEAT REGION OF PRORP DOMAIN-CONTAINING PROTEIN"/>
    <property type="match status" value="1"/>
</dbReference>
<dbReference type="Pfam" id="PF02390">
    <property type="entry name" value="Methyltransf_4"/>
    <property type="match status" value="1"/>
</dbReference>
<dbReference type="SUPFAM" id="SSF53335">
    <property type="entry name" value="S-adenosyl-L-methionine-dependent methyltransferases"/>
    <property type="match status" value="1"/>
</dbReference>
<dbReference type="PROSITE" id="PS51625">
    <property type="entry name" value="SAM_MT_TRMB"/>
    <property type="match status" value="1"/>
</dbReference>
<organism>
    <name type="scientific">Rhodococcus jostii (strain RHA1)</name>
    <dbReference type="NCBI Taxonomy" id="101510"/>
    <lineage>
        <taxon>Bacteria</taxon>
        <taxon>Bacillati</taxon>
        <taxon>Actinomycetota</taxon>
        <taxon>Actinomycetes</taxon>
        <taxon>Mycobacteriales</taxon>
        <taxon>Nocardiaceae</taxon>
        <taxon>Rhodococcus</taxon>
    </lineage>
</organism>
<reference key="1">
    <citation type="journal article" date="2006" name="Proc. Natl. Acad. Sci. U.S.A.">
        <title>The complete genome of Rhodococcus sp. RHA1 provides insights into a catabolic powerhouse.</title>
        <authorList>
            <person name="McLeod M.P."/>
            <person name="Warren R.L."/>
            <person name="Hsiao W.W.L."/>
            <person name="Araki N."/>
            <person name="Myhre M."/>
            <person name="Fernandes C."/>
            <person name="Miyazawa D."/>
            <person name="Wong W."/>
            <person name="Lillquist A.L."/>
            <person name="Wang D."/>
            <person name="Dosanjh M."/>
            <person name="Hara H."/>
            <person name="Petrescu A."/>
            <person name="Morin R.D."/>
            <person name="Yang G."/>
            <person name="Stott J.M."/>
            <person name="Schein J.E."/>
            <person name="Shin H."/>
            <person name="Smailus D."/>
            <person name="Siddiqui A.S."/>
            <person name="Marra M.A."/>
            <person name="Jones S.J.M."/>
            <person name="Holt R."/>
            <person name="Brinkman F.S.L."/>
            <person name="Miyauchi K."/>
            <person name="Fukuda M."/>
            <person name="Davies J.E."/>
            <person name="Mohn W.W."/>
            <person name="Eltis L.D."/>
        </authorList>
    </citation>
    <scope>NUCLEOTIDE SEQUENCE [LARGE SCALE GENOMIC DNA]</scope>
    <source>
        <strain>RHA1</strain>
    </source>
</reference>
<keyword id="KW-0489">Methyltransferase</keyword>
<keyword id="KW-0949">S-adenosyl-L-methionine</keyword>
<keyword id="KW-0808">Transferase</keyword>
<keyword id="KW-0819">tRNA processing</keyword>
<feature type="chain" id="PRO_0000288211" description="tRNA (guanine-N(7)-)-methyltransferase">
    <location>
        <begin position="1"/>
        <end position="258"/>
    </location>
</feature>
<feature type="region of interest" description="Disordered" evidence="3">
    <location>
        <begin position="1"/>
        <end position="42"/>
    </location>
</feature>
<feature type="active site" evidence="1">
    <location>
        <position position="165"/>
    </location>
</feature>
<feature type="binding site" evidence="2">
    <location>
        <position position="90"/>
    </location>
    <ligand>
        <name>S-adenosyl-L-methionine</name>
        <dbReference type="ChEBI" id="CHEBI:59789"/>
    </ligand>
</feature>
<feature type="binding site" evidence="2">
    <location>
        <position position="115"/>
    </location>
    <ligand>
        <name>S-adenosyl-L-methionine</name>
        <dbReference type="ChEBI" id="CHEBI:59789"/>
    </ligand>
</feature>
<feature type="binding site" evidence="2">
    <location>
        <position position="142"/>
    </location>
    <ligand>
        <name>S-adenosyl-L-methionine</name>
        <dbReference type="ChEBI" id="CHEBI:59789"/>
    </ligand>
</feature>
<feature type="binding site" evidence="2">
    <location>
        <position position="165"/>
    </location>
    <ligand>
        <name>S-adenosyl-L-methionine</name>
        <dbReference type="ChEBI" id="CHEBI:59789"/>
    </ligand>
</feature>
<feature type="binding site" evidence="2">
    <location>
        <position position="169"/>
    </location>
    <ligand>
        <name>substrate</name>
    </ligand>
</feature>
<feature type="binding site" evidence="2">
    <location>
        <position position="201"/>
    </location>
    <ligand>
        <name>substrate</name>
    </ligand>
</feature>
<feature type="binding site" evidence="2">
    <location>
        <begin position="235"/>
        <end position="238"/>
    </location>
    <ligand>
        <name>substrate</name>
    </ligand>
</feature>
<proteinExistence type="inferred from homology"/>
<evidence type="ECO:0000250" key="1"/>
<evidence type="ECO:0000255" key="2">
    <source>
        <dbReference type="HAMAP-Rule" id="MF_01057"/>
    </source>
</evidence>
<evidence type="ECO:0000256" key="3">
    <source>
        <dbReference type="SAM" id="MobiDB-lite"/>
    </source>
</evidence>
<sequence length="258" mass="28586">MPETPLMRDNGPVNHADQDAPAVPEEGQTKDSKGSRLHPRVTSFRSRRGALTVAQQESWDRQWPRIGADVSDHRLDAPSWFGRDAPLILEIGSGTGTATAAMAKAEPHVNLMAVEVYRPGLAQLLQQIERDEIPNIRVLRGDAMDVLENMIEPESLTGVRVFFPDPWPKARHHKRRLLQSPTFALIASRLKAGGVLHVATDHAEYAEAIAEAGNAEPLLTSLDWESPMTHERPVTKFEDKAHQVGSAITELIWGKIRS</sequence>
<accession>Q0S679</accession>
<name>TRMB_RHOJR</name>
<comment type="function">
    <text evidence="2">Catalyzes the formation of N(7)-methylguanine at position 46 (m7G46) in tRNA.</text>
</comment>
<comment type="catalytic activity">
    <reaction evidence="2">
        <text>guanosine(46) in tRNA + S-adenosyl-L-methionine = N(7)-methylguanosine(46) in tRNA + S-adenosyl-L-homocysteine</text>
        <dbReference type="Rhea" id="RHEA:42708"/>
        <dbReference type="Rhea" id="RHEA-COMP:10188"/>
        <dbReference type="Rhea" id="RHEA-COMP:10189"/>
        <dbReference type="ChEBI" id="CHEBI:57856"/>
        <dbReference type="ChEBI" id="CHEBI:59789"/>
        <dbReference type="ChEBI" id="CHEBI:74269"/>
        <dbReference type="ChEBI" id="CHEBI:74480"/>
        <dbReference type="EC" id="2.1.1.33"/>
    </reaction>
</comment>
<comment type="pathway">
    <text evidence="2">tRNA modification; N(7)-methylguanine-tRNA biosynthesis.</text>
</comment>
<comment type="similarity">
    <text evidence="2">Belongs to the class I-like SAM-binding methyltransferase superfamily. TrmB family.</text>
</comment>
<gene>
    <name evidence="2" type="primary">trmB</name>
    <name type="ordered locus">RHA1_ro05176</name>
</gene>